<keyword id="KW-0997">Cell inner membrane</keyword>
<keyword id="KW-1003">Cell membrane</keyword>
<keyword id="KW-0998">Cell outer membrane</keyword>
<keyword id="KW-0378">Hydrolase</keyword>
<keyword id="KW-0442">Lipid degradation</keyword>
<keyword id="KW-0443">Lipid metabolism</keyword>
<keyword id="KW-0472">Membrane</keyword>
<keyword id="KW-0595">Phospholipid degradation</keyword>
<keyword id="KW-1208">Phospholipid metabolism</keyword>
<keyword id="KW-1185">Reference proteome</keyword>
<keyword id="KW-0812">Transmembrane</keyword>
<keyword id="KW-1133">Transmembrane helix</keyword>
<accession>P0A926</accession>
<accession>P18201</accession>
<comment type="function">
    <text evidence="1">Catalyzes the dephosphorylation of diacylglycerol diphosphate (DGPP) to phosphatidate (PA) and the subsequent dephosphorylation of PA to diacylglycerol (DAG). Also has undecaprenyl pyrophosphate phosphatase activity, required for the biosynthesis of the lipid carrier undecaprenyl phosphate. Can also use lysophosphatidic acid (LPA) and phosphatidylglycerophosphate as substrates. The pattern of activities varies according to subcellular location, PGP phosphatase activity is higher in the cytoplasmic membrane, whereas PA and LPA phosphatase activities are higher in the outer membrane. Activity is independent of a divalent cation ion and insensitive to inhibition by N-ethylmaleimide (By similarity).</text>
</comment>
<comment type="catalytic activity">
    <reaction>
        <text>a 1,2-diacyl-sn-glycero-3-phospho-(1'-sn-glycero-3'-phosphate) + H2O = a 1,2-diacyl-sn-glycero-3-phospho-(1'-sn-glycerol) + phosphate</text>
        <dbReference type="Rhea" id="RHEA:33751"/>
        <dbReference type="ChEBI" id="CHEBI:15377"/>
        <dbReference type="ChEBI" id="CHEBI:43474"/>
        <dbReference type="ChEBI" id="CHEBI:60110"/>
        <dbReference type="ChEBI" id="CHEBI:64716"/>
        <dbReference type="EC" id="3.1.3.27"/>
    </reaction>
</comment>
<comment type="catalytic activity">
    <reaction>
        <text>a 1,2-diacyl-sn-glycerol 3-diphosphate + H2O = a 1,2-diacyl-sn-glycero-3-phosphate + phosphate + H(+)</text>
        <dbReference type="Rhea" id="RHEA:27449"/>
        <dbReference type="ChEBI" id="CHEBI:15377"/>
        <dbReference type="ChEBI" id="CHEBI:15378"/>
        <dbReference type="ChEBI" id="CHEBI:43474"/>
        <dbReference type="ChEBI" id="CHEBI:58608"/>
        <dbReference type="ChEBI" id="CHEBI:59996"/>
        <dbReference type="EC" id="3.6.1.75"/>
    </reaction>
</comment>
<comment type="catalytic activity">
    <reaction>
        <text>a 1,2-diacyl-sn-glycero-3-phosphate + H2O = a 1,2-diacyl-sn-glycerol + phosphate</text>
        <dbReference type="Rhea" id="RHEA:27429"/>
        <dbReference type="ChEBI" id="CHEBI:15377"/>
        <dbReference type="ChEBI" id="CHEBI:17815"/>
        <dbReference type="ChEBI" id="CHEBI:43474"/>
        <dbReference type="ChEBI" id="CHEBI:58608"/>
        <dbReference type="EC" id="3.1.3.4"/>
    </reaction>
</comment>
<comment type="catalytic activity">
    <reaction>
        <text>di-trans,octa-cis-undecaprenyl diphosphate + H2O = di-trans,octa-cis-undecaprenyl phosphate + phosphate + H(+)</text>
        <dbReference type="Rhea" id="RHEA:28094"/>
        <dbReference type="ChEBI" id="CHEBI:15377"/>
        <dbReference type="ChEBI" id="CHEBI:15378"/>
        <dbReference type="ChEBI" id="CHEBI:43474"/>
        <dbReference type="ChEBI" id="CHEBI:58405"/>
        <dbReference type="ChEBI" id="CHEBI:60392"/>
        <dbReference type="EC" id="3.6.1.27"/>
    </reaction>
</comment>
<comment type="pathway">
    <text>Phospholipid metabolism; phosphatidylglycerol biosynthesis; phosphatidylglycerol from CDP-diacylglycerol: step 2/2.</text>
</comment>
<comment type="subcellular location">
    <subcellularLocation>
        <location evidence="1">Cell inner membrane</location>
        <topology evidence="1">Multi-pass membrane protein</topology>
    </subcellularLocation>
    <subcellularLocation>
        <location evidence="1">Cell outer membrane</location>
        <topology evidence="1">Multi-pass membrane protein</topology>
    </subcellularLocation>
</comment>
<comment type="PTM">
    <text evidence="1">The N-terminus is blocked.</text>
</comment>
<comment type="similarity">
    <text evidence="3">Belongs to the PA-phosphatase related phosphoesterase family.</text>
</comment>
<proteinExistence type="inferred from homology"/>
<gene>
    <name type="primary">pgpB</name>
    <name type="ordered locus">SF1282</name>
    <name type="ordered locus">S1365</name>
</gene>
<sequence>MRSIARRTAVGAALLLVMPVAVWISGWRWQPGEQSWLLKAAFWVTETVTQPWGVITHLILFGWFLWCLRFRIKAAFVLFAILAAAILVGQGVKSWIKDKVQEPRPFVIWLEKTHHIPVDEFYTLKRAERGNLVKEQLAEEKNIPQYLRSHWQKETGFAFPSGHTMFAASWALLAVGLLWPRRRTLTIAILLVWATGVMGSRLLLGMHWPRDLVVATLISWALVAVATWLAQRICGPLTPPAEENREIAQREQES</sequence>
<dbReference type="EC" id="3.1.3.27"/>
<dbReference type="EC" id="3.6.1.75"/>
<dbReference type="EC" id="3.1.3.4"/>
<dbReference type="EC" id="3.6.1.27"/>
<dbReference type="EMBL" id="AE005674">
    <property type="protein sequence ID" value="AAN42894.1"/>
    <property type="molecule type" value="Genomic_DNA"/>
</dbReference>
<dbReference type="EMBL" id="AE014073">
    <property type="protein sequence ID" value="AAP16778.1"/>
    <property type="molecule type" value="Genomic_DNA"/>
</dbReference>
<dbReference type="RefSeq" id="NP_707187.1">
    <property type="nucleotide sequence ID" value="NC_004337.2"/>
</dbReference>
<dbReference type="RefSeq" id="WP_001256538.1">
    <property type="nucleotide sequence ID" value="NZ_WPGW01000009.1"/>
</dbReference>
<dbReference type="SMR" id="P0A926"/>
<dbReference type="STRING" id="198214.SF1282"/>
<dbReference type="PaxDb" id="198214-SF1282"/>
<dbReference type="GeneID" id="1024235"/>
<dbReference type="GeneID" id="75203391"/>
<dbReference type="KEGG" id="sfl:SF1282"/>
<dbReference type="KEGG" id="sfx:S1365"/>
<dbReference type="PATRIC" id="fig|198214.7.peg.1503"/>
<dbReference type="HOGENOM" id="CLU_083863_0_0_6"/>
<dbReference type="UniPathway" id="UPA00084">
    <property type="reaction ID" value="UER00504"/>
</dbReference>
<dbReference type="Proteomes" id="UP000001006">
    <property type="component" value="Chromosome"/>
</dbReference>
<dbReference type="Proteomes" id="UP000002673">
    <property type="component" value="Chromosome"/>
</dbReference>
<dbReference type="GO" id="GO:0009279">
    <property type="term" value="C:cell outer membrane"/>
    <property type="evidence" value="ECO:0007669"/>
    <property type="project" value="UniProtKB-SubCell"/>
</dbReference>
<dbReference type="GO" id="GO:0005886">
    <property type="term" value="C:plasma membrane"/>
    <property type="evidence" value="ECO:0007669"/>
    <property type="project" value="UniProtKB-SubCell"/>
</dbReference>
<dbReference type="GO" id="GO:0000810">
    <property type="term" value="F:diacylglycerol diphosphate phosphatase activity"/>
    <property type="evidence" value="ECO:0007669"/>
    <property type="project" value="RHEA"/>
</dbReference>
<dbReference type="GO" id="GO:0008195">
    <property type="term" value="F:phosphatidate phosphatase activity"/>
    <property type="evidence" value="ECO:0007669"/>
    <property type="project" value="UniProtKB-EC"/>
</dbReference>
<dbReference type="GO" id="GO:0008962">
    <property type="term" value="F:phosphatidylglycerophosphatase activity"/>
    <property type="evidence" value="ECO:0007669"/>
    <property type="project" value="UniProtKB-EC"/>
</dbReference>
<dbReference type="GO" id="GO:0050380">
    <property type="term" value="F:undecaprenyl-diphosphatase activity"/>
    <property type="evidence" value="ECO:0007669"/>
    <property type="project" value="UniProtKB-EC"/>
</dbReference>
<dbReference type="GO" id="GO:0006655">
    <property type="term" value="P:phosphatidylglycerol biosynthetic process"/>
    <property type="evidence" value="ECO:0007669"/>
    <property type="project" value="UniProtKB-UniPathway"/>
</dbReference>
<dbReference type="GO" id="GO:0009395">
    <property type="term" value="P:phospholipid catabolic process"/>
    <property type="evidence" value="ECO:0007669"/>
    <property type="project" value="UniProtKB-KW"/>
</dbReference>
<dbReference type="CDD" id="cd01610">
    <property type="entry name" value="PAP2_like"/>
    <property type="match status" value="1"/>
</dbReference>
<dbReference type="FunFam" id="1.20.144.10:FF:000008">
    <property type="entry name" value="Phosphatidylglycerophosphatase B"/>
    <property type="match status" value="1"/>
</dbReference>
<dbReference type="Gene3D" id="1.20.144.10">
    <property type="entry name" value="Phosphatidic acid phosphatase type 2/haloperoxidase"/>
    <property type="match status" value="1"/>
</dbReference>
<dbReference type="InterPro" id="IPR036938">
    <property type="entry name" value="P_Acid_Pase_2/haloperoxi_sf"/>
</dbReference>
<dbReference type="InterPro" id="IPR000326">
    <property type="entry name" value="P_Acid_Pase_2/haloperoxidase"/>
</dbReference>
<dbReference type="NCBIfam" id="NF007975">
    <property type="entry name" value="PRK10699.1"/>
    <property type="match status" value="1"/>
</dbReference>
<dbReference type="PANTHER" id="PTHR14969:SF54">
    <property type="entry name" value="PHOSPHATIDYLGLYCEROPHOSPHATASE B"/>
    <property type="match status" value="1"/>
</dbReference>
<dbReference type="PANTHER" id="PTHR14969">
    <property type="entry name" value="SPHINGOSINE-1-PHOSPHATE PHOSPHOHYDROLASE"/>
    <property type="match status" value="1"/>
</dbReference>
<dbReference type="Pfam" id="PF01569">
    <property type="entry name" value="PAP2"/>
    <property type="match status" value="1"/>
</dbReference>
<dbReference type="SMART" id="SM00014">
    <property type="entry name" value="acidPPc"/>
    <property type="match status" value="1"/>
</dbReference>
<dbReference type="SUPFAM" id="SSF48317">
    <property type="entry name" value="Acid phosphatase/Vanadium-dependent haloperoxidase"/>
    <property type="match status" value="1"/>
</dbReference>
<organism>
    <name type="scientific">Shigella flexneri</name>
    <dbReference type="NCBI Taxonomy" id="623"/>
    <lineage>
        <taxon>Bacteria</taxon>
        <taxon>Pseudomonadati</taxon>
        <taxon>Pseudomonadota</taxon>
        <taxon>Gammaproteobacteria</taxon>
        <taxon>Enterobacterales</taxon>
        <taxon>Enterobacteriaceae</taxon>
        <taxon>Shigella</taxon>
    </lineage>
</organism>
<name>PGPB_SHIFL</name>
<reference key="1">
    <citation type="journal article" date="2002" name="Nucleic Acids Res.">
        <title>Genome sequence of Shigella flexneri 2a: insights into pathogenicity through comparison with genomes of Escherichia coli K12 and O157.</title>
        <authorList>
            <person name="Jin Q."/>
            <person name="Yuan Z."/>
            <person name="Xu J."/>
            <person name="Wang Y."/>
            <person name="Shen Y."/>
            <person name="Lu W."/>
            <person name="Wang J."/>
            <person name="Liu H."/>
            <person name="Yang J."/>
            <person name="Yang F."/>
            <person name="Zhang X."/>
            <person name="Zhang J."/>
            <person name="Yang G."/>
            <person name="Wu H."/>
            <person name="Qu D."/>
            <person name="Dong J."/>
            <person name="Sun L."/>
            <person name="Xue Y."/>
            <person name="Zhao A."/>
            <person name="Gao Y."/>
            <person name="Zhu J."/>
            <person name="Kan B."/>
            <person name="Ding K."/>
            <person name="Chen S."/>
            <person name="Cheng H."/>
            <person name="Yao Z."/>
            <person name="He B."/>
            <person name="Chen R."/>
            <person name="Ma D."/>
            <person name="Qiang B."/>
            <person name="Wen Y."/>
            <person name="Hou Y."/>
            <person name="Yu J."/>
        </authorList>
    </citation>
    <scope>NUCLEOTIDE SEQUENCE [LARGE SCALE GENOMIC DNA]</scope>
    <source>
        <strain>301 / Serotype 2a</strain>
    </source>
</reference>
<reference key="2">
    <citation type="journal article" date="2003" name="Infect. Immun.">
        <title>Complete genome sequence and comparative genomics of Shigella flexneri serotype 2a strain 2457T.</title>
        <authorList>
            <person name="Wei J."/>
            <person name="Goldberg M.B."/>
            <person name="Burland V."/>
            <person name="Venkatesan M.M."/>
            <person name="Deng W."/>
            <person name="Fournier G."/>
            <person name="Mayhew G.F."/>
            <person name="Plunkett G. III"/>
            <person name="Rose D.J."/>
            <person name="Darling A."/>
            <person name="Mau B."/>
            <person name="Perna N.T."/>
            <person name="Payne S.M."/>
            <person name="Runyen-Janecky L.J."/>
            <person name="Zhou S."/>
            <person name="Schwartz D.C."/>
            <person name="Blattner F.R."/>
        </authorList>
    </citation>
    <scope>NUCLEOTIDE SEQUENCE [LARGE SCALE GENOMIC DNA]</scope>
    <source>
        <strain>ATCC 700930 / 2457T / Serotype 2a</strain>
    </source>
</reference>
<feature type="initiator methionine" description="Removed" evidence="2">
    <location>
        <position position="1"/>
    </location>
</feature>
<feature type="chain" id="PRO_0000058364" description="Phosphatidylglycerophosphatase B">
    <location>
        <begin position="2"/>
        <end position="254"/>
    </location>
</feature>
<feature type="transmembrane region" description="Helical" evidence="2">
    <location>
        <begin position="2"/>
        <end position="24"/>
    </location>
</feature>
<feature type="topological domain" description="Periplasmic" evidence="2">
    <location>
        <begin position="25"/>
        <end position="54"/>
    </location>
</feature>
<feature type="transmembrane region" description="Helical" evidence="2">
    <location>
        <begin position="55"/>
        <end position="66"/>
    </location>
</feature>
<feature type="topological domain" description="Cytoplasmic" evidence="2">
    <location>
        <begin position="67"/>
        <end position="71"/>
    </location>
</feature>
<feature type="transmembrane region" description="Helical" evidence="2">
    <location>
        <begin position="72"/>
        <end position="94"/>
    </location>
</feature>
<feature type="topological domain" description="Periplasmic" evidence="2">
    <location>
        <begin position="95"/>
        <end position="161"/>
    </location>
</feature>
<feature type="transmembrane region" description="Helical" evidence="2">
    <location>
        <begin position="162"/>
        <end position="176"/>
    </location>
</feature>
<feature type="topological domain" description="Cytoplasmic" evidence="2">
    <location>
        <begin position="177"/>
        <end position="182"/>
    </location>
</feature>
<feature type="transmembrane region" description="Helical" evidence="2">
    <location>
        <begin position="183"/>
        <end position="202"/>
    </location>
</feature>
<feature type="topological domain" description="Periplasmic" evidence="2">
    <location>
        <begin position="203"/>
        <end position="208"/>
    </location>
</feature>
<feature type="transmembrane region" description="Helical" evidence="2">
    <location>
        <begin position="209"/>
        <end position="232"/>
    </location>
</feature>
<feature type="topological domain" description="Cytoplasmic" evidence="2">
    <location>
        <begin position="233"/>
        <end position="254"/>
    </location>
</feature>
<feature type="region of interest" description="Phosphatase sequence motif I" evidence="3">
    <location>
        <begin position="97"/>
        <end position="105"/>
    </location>
</feature>
<feature type="region of interest" description="Phosphatase sequence motif II" evidence="3">
    <location>
        <begin position="160"/>
        <end position="163"/>
    </location>
</feature>
<feature type="region of interest" description="Phosphatase sequence motif III" evidence="3">
    <location>
        <begin position="200"/>
        <end position="211"/>
    </location>
</feature>
<feature type="active site" description="Proton donor; for a subset of substrates" evidence="2">
    <location>
        <position position="163"/>
    </location>
</feature>
<feature type="active site" description="Nucleophile" evidence="2">
    <location>
        <position position="207"/>
    </location>
</feature>
<feature type="site" description="Stabilizes the active site histidine for nucleophilic attack" evidence="2">
    <location>
        <position position="211"/>
    </location>
</feature>
<protein>
    <recommendedName>
        <fullName>Phosphatidylglycerophosphatase B</fullName>
        <ecNumber>3.1.3.27</ecNumber>
    </recommendedName>
    <alternativeName>
        <fullName>Diacylglycerol pyrophosphate phosphatase</fullName>
        <shortName>DGPP phosphatase</shortName>
        <ecNumber>3.6.1.75</ecNumber>
    </alternativeName>
    <alternativeName>
        <fullName>Phosphatidate phosphatase</fullName>
        <ecNumber>3.1.3.4</ecNumber>
    </alternativeName>
    <alternativeName>
        <fullName>Undecaprenyl pyrophosphate phosphatase</fullName>
        <ecNumber>3.6.1.27</ecNumber>
    </alternativeName>
    <alternativeName>
        <fullName>Undecaprenyl-diphosphatase</fullName>
    </alternativeName>
</protein>
<evidence type="ECO:0000250" key="1"/>
<evidence type="ECO:0000250" key="2">
    <source>
        <dbReference type="UniProtKB" id="P0A924"/>
    </source>
</evidence>
<evidence type="ECO:0000305" key="3"/>